<dbReference type="EMBL" id="CP000730">
    <property type="protein sequence ID" value="ABX30617.1"/>
    <property type="molecule type" value="Genomic_DNA"/>
</dbReference>
<dbReference type="RefSeq" id="WP_000138214.1">
    <property type="nucleotide sequence ID" value="NC_010079.1"/>
</dbReference>
<dbReference type="SMR" id="A8Z5D0"/>
<dbReference type="KEGG" id="sax:USA300HOU_2631"/>
<dbReference type="HOGENOM" id="CLU_1160528_0_0_9"/>
<dbReference type="GO" id="GO:0005737">
    <property type="term" value="C:cytoplasm"/>
    <property type="evidence" value="ECO:0007669"/>
    <property type="project" value="UniProtKB-SubCell"/>
</dbReference>
<dbReference type="GO" id="GO:0030552">
    <property type="term" value="F:cAMP binding"/>
    <property type="evidence" value="ECO:0007669"/>
    <property type="project" value="UniProtKB-KW"/>
</dbReference>
<dbReference type="GO" id="GO:0003677">
    <property type="term" value="F:DNA binding"/>
    <property type="evidence" value="ECO:0007669"/>
    <property type="project" value="UniProtKB-KW"/>
</dbReference>
<dbReference type="GO" id="GO:0006355">
    <property type="term" value="P:regulation of DNA-templated transcription"/>
    <property type="evidence" value="ECO:0007669"/>
    <property type="project" value="InterPro"/>
</dbReference>
<dbReference type="Gene3D" id="2.60.120.10">
    <property type="entry name" value="Jelly Rolls"/>
    <property type="match status" value="1"/>
</dbReference>
<dbReference type="Gene3D" id="1.10.10.10">
    <property type="entry name" value="Winged helix-like DNA-binding domain superfamily/Winged helix DNA-binding domain"/>
    <property type="match status" value="1"/>
</dbReference>
<dbReference type="InterPro" id="IPR000595">
    <property type="entry name" value="cNMP-bd_dom"/>
</dbReference>
<dbReference type="InterPro" id="IPR018490">
    <property type="entry name" value="cNMP-bd_dom_sf"/>
</dbReference>
<dbReference type="InterPro" id="IPR012318">
    <property type="entry name" value="HTH_CRP"/>
</dbReference>
<dbReference type="InterPro" id="IPR014710">
    <property type="entry name" value="RmlC-like_jellyroll"/>
</dbReference>
<dbReference type="InterPro" id="IPR036388">
    <property type="entry name" value="WH-like_DNA-bd_sf"/>
</dbReference>
<dbReference type="InterPro" id="IPR036390">
    <property type="entry name" value="WH_DNA-bd_sf"/>
</dbReference>
<dbReference type="Pfam" id="PF00027">
    <property type="entry name" value="cNMP_binding"/>
    <property type="match status" value="1"/>
</dbReference>
<dbReference type="Pfam" id="PF13545">
    <property type="entry name" value="HTH_Crp_2"/>
    <property type="match status" value="1"/>
</dbReference>
<dbReference type="SUPFAM" id="SSF51206">
    <property type="entry name" value="cAMP-binding domain-like"/>
    <property type="match status" value="1"/>
</dbReference>
<dbReference type="SUPFAM" id="SSF46785">
    <property type="entry name" value="Winged helix' DNA-binding domain"/>
    <property type="match status" value="1"/>
</dbReference>
<sequence length="234" mass="27428">MTENFILGRNNKLEHELKALADYINIPYSILQPYQSECFVRHYTKGQVIYFSPQESSNIYFLIEGNIIREHYNQNGDVYRYFNKEQVLFPISNLFHPKEVNELCTALTDCTVLGLPRELMAFLCKANDDIFLTLFALINDNEQQHMNYNMALTSKFAKDRIIKLICHLCQTVGYDQDEFYEIKQFLTIQLMSDMAGISRETAGHIIHELKDEKLVVKDHKNWLVSKHLFNDVCV</sequence>
<gene>
    <name type="primary">arcR</name>
    <name type="ordered locus">USA300HOU_2631</name>
</gene>
<reference key="1">
    <citation type="journal article" date="2007" name="BMC Microbiol.">
        <title>Subtle genetic changes enhance virulence of methicillin resistant and sensitive Staphylococcus aureus.</title>
        <authorList>
            <person name="Highlander S.K."/>
            <person name="Hulten K.G."/>
            <person name="Qin X."/>
            <person name="Jiang H."/>
            <person name="Yerrapragada S."/>
            <person name="Mason E.O. Jr."/>
            <person name="Shang Y."/>
            <person name="Williams T.M."/>
            <person name="Fortunov R.M."/>
            <person name="Liu Y."/>
            <person name="Igboeli O."/>
            <person name="Petrosino J."/>
            <person name="Tirumalai M."/>
            <person name="Uzman A."/>
            <person name="Fox G.E."/>
            <person name="Cardenas A.M."/>
            <person name="Muzny D.M."/>
            <person name="Hemphill L."/>
            <person name="Ding Y."/>
            <person name="Dugan S."/>
            <person name="Blyth P.R."/>
            <person name="Buhay C.J."/>
            <person name="Dinh H.H."/>
            <person name="Hawes A.C."/>
            <person name="Holder M."/>
            <person name="Kovar C.L."/>
            <person name="Lee S.L."/>
            <person name="Liu W."/>
            <person name="Nazareth L.V."/>
            <person name="Wang Q."/>
            <person name="Zhou J."/>
            <person name="Kaplan S.L."/>
            <person name="Weinstock G.M."/>
        </authorList>
    </citation>
    <scope>NUCLEOTIDE SEQUENCE [LARGE SCALE GENOMIC DNA]</scope>
    <source>
        <strain>USA300 / TCH1516</strain>
    </source>
</reference>
<protein>
    <recommendedName>
        <fullName>HTH-type transcriptional regulator ArcR</fullName>
    </recommendedName>
</protein>
<evidence type="ECO:0000250" key="1"/>
<organism>
    <name type="scientific">Staphylococcus aureus (strain USA300 / TCH1516)</name>
    <dbReference type="NCBI Taxonomy" id="451516"/>
    <lineage>
        <taxon>Bacteria</taxon>
        <taxon>Bacillati</taxon>
        <taxon>Bacillota</taxon>
        <taxon>Bacilli</taxon>
        <taxon>Bacillales</taxon>
        <taxon>Staphylococcaceae</taxon>
        <taxon>Staphylococcus</taxon>
    </lineage>
</organism>
<proteinExistence type="inferred from homology"/>
<name>ARCR_STAAT</name>
<feature type="chain" id="PRO_0000349416" description="HTH-type transcriptional regulator ArcR">
    <location>
        <begin position="1"/>
        <end position="234"/>
    </location>
</feature>
<feature type="domain" description="HTH crp-type">
    <location>
        <begin position="155"/>
        <end position="228"/>
    </location>
</feature>
<feature type="DNA-binding region" description="H-T-H motif" evidence="1">
    <location>
        <begin position="188"/>
        <end position="207"/>
    </location>
</feature>
<feature type="binding site">
    <location>
        <begin position="40"/>
        <end position="129"/>
    </location>
    <ligand>
        <name>a nucleoside 3',5'-cyclic phosphate</name>
        <dbReference type="ChEBI" id="CHEBI:58464"/>
    </ligand>
</feature>
<keyword id="KW-0010">Activator</keyword>
<keyword id="KW-0114">cAMP</keyword>
<keyword id="KW-0116">cAMP-binding</keyword>
<keyword id="KW-0963">Cytoplasm</keyword>
<keyword id="KW-0238">DNA-binding</keyword>
<keyword id="KW-0547">Nucleotide-binding</keyword>
<keyword id="KW-0804">Transcription</keyword>
<keyword id="KW-0805">Transcription regulation</keyword>
<comment type="function">
    <text evidence="1">Positively regulates the expression of the arcABDCR operon under anaerobic conditions, thus playing an essential role in arginine catabolism. May also control the expression of genes encoding proteins which are involved in anaerobic metabolism. Can bind cyclic AMP (By similarity).</text>
</comment>
<comment type="subcellular location">
    <subcellularLocation>
        <location evidence="1">Cytoplasm</location>
    </subcellularLocation>
</comment>
<accession>A8Z5D0</accession>